<dbReference type="EC" id="6.3.4.5" evidence="1"/>
<dbReference type="EMBL" id="CP000316">
    <property type="protein sequence ID" value="ABE43537.1"/>
    <property type="molecule type" value="Genomic_DNA"/>
</dbReference>
<dbReference type="RefSeq" id="WP_011482536.1">
    <property type="nucleotide sequence ID" value="NC_007948.1"/>
</dbReference>
<dbReference type="SMR" id="Q12D55"/>
<dbReference type="STRING" id="296591.Bpro_1599"/>
<dbReference type="KEGG" id="pol:Bpro_1599"/>
<dbReference type="eggNOG" id="COG0137">
    <property type="taxonomic scope" value="Bacteria"/>
</dbReference>
<dbReference type="HOGENOM" id="CLU_032784_4_1_4"/>
<dbReference type="OrthoDB" id="9801641at2"/>
<dbReference type="UniPathway" id="UPA00068">
    <property type="reaction ID" value="UER00113"/>
</dbReference>
<dbReference type="Proteomes" id="UP000001983">
    <property type="component" value="Chromosome"/>
</dbReference>
<dbReference type="GO" id="GO:0005737">
    <property type="term" value="C:cytoplasm"/>
    <property type="evidence" value="ECO:0007669"/>
    <property type="project" value="UniProtKB-SubCell"/>
</dbReference>
<dbReference type="GO" id="GO:0004055">
    <property type="term" value="F:argininosuccinate synthase activity"/>
    <property type="evidence" value="ECO:0007669"/>
    <property type="project" value="UniProtKB-UniRule"/>
</dbReference>
<dbReference type="GO" id="GO:0005524">
    <property type="term" value="F:ATP binding"/>
    <property type="evidence" value="ECO:0007669"/>
    <property type="project" value="UniProtKB-UniRule"/>
</dbReference>
<dbReference type="GO" id="GO:0042803">
    <property type="term" value="F:protein homodimerization activity"/>
    <property type="evidence" value="ECO:0007669"/>
    <property type="project" value="InterPro"/>
</dbReference>
<dbReference type="GO" id="GO:0000053">
    <property type="term" value="P:argininosuccinate metabolic process"/>
    <property type="evidence" value="ECO:0007669"/>
    <property type="project" value="TreeGrafter"/>
</dbReference>
<dbReference type="GO" id="GO:0006526">
    <property type="term" value="P:L-arginine biosynthetic process"/>
    <property type="evidence" value="ECO:0007669"/>
    <property type="project" value="UniProtKB-UniRule"/>
</dbReference>
<dbReference type="GO" id="GO:0000050">
    <property type="term" value="P:urea cycle"/>
    <property type="evidence" value="ECO:0007669"/>
    <property type="project" value="TreeGrafter"/>
</dbReference>
<dbReference type="CDD" id="cd01999">
    <property type="entry name" value="ASS"/>
    <property type="match status" value="1"/>
</dbReference>
<dbReference type="FunFam" id="1.10.287.400:FF:000001">
    <property type="entry name" value="Argininosuccinate synthase"/>
    <property type="match status" value="1"/>
</dbReference>
<dbReference type="Gene3D" id="1.10.287.400">
    <property type="match status" value="1"/>
</dbReference>
<dbReference type="Gene3D" id="3.90.1260.10">
    <property type="entry name" value="Argininosuccinate synthetase, chain A, domain 2"/>
    <property type="match status" value="1"/>
</dbReference>
<dbReference type="Gene3D" id="3.40.50.620">
    <property type="entry name" value="HUPs"/>
    <property type="match status" value="1"/>
</dbReference>
<dbReference type="HAMAP" id="MF_00581">
    <property type="entry name" value="Arg_succ_synth_type2"/>
    <property type="match status" value="1"/>
</dbReference>
<dbReference type="InterPro" id="IPR023437">
    <property type="entry name" value="Arg_succ_synth_type2_subfam"/>
</dbReference>
<dbReference type="InterPro" id="IPR048268">
    <property type="entry name" value="Arginosuc_syn_C"/>
</dbReference>
<dbReference type="InterPro" id="IPR048267">
    <property type="entry name" value="Arginosuc_syn_N"/>
</dbReference>
<dbReference type="InterPro" id="IPR001518">
    <property type="entry name" value="Arginosuc_synth"/>
</dbReference>
<dbReference type="InterPro" id="IPR018223">
    <property type="entry name" value="Arginosuc_synth_CS"/>
</dbReference>
<dbReference type="InterPro" id="IPR023434">
    <property type="entry name" value="Arginosuc_synth_type_1_subfam"/>
</dbReference>
<dbReference type="InterPro" id="IPR024074">
    <property type="entry name" value="AS_cat/multimer_dom_body"/>
</dbReference>
<dbReference type="InterPro" id="IPR024073">
    <property type="entry name" value="AS_multimer_C_tail"/>
</dbReference>
<dbReference type="InterPro" id="IPR014729">
    <property type="entry name" value="Rossmann-like_a/b/a_fold"/>
</dbReference>
<dbReference type="NCBIfam" id="TIGR00032">
    <property type="entry name" value="argG"/>
    <property type="match status" value="1"/>
</dbReference>
<dbReference type="NCBIfam" id="NF003779">
    <property type="entry name" value="PRK05370.1"/>
    <property type="match status" value="1"/>
</dbReference>
<dbReference type="PANTHER" id="PTHR11587">
    <property type="entry name" value="ARGININOSUCCINATE SYNTHASE"/>
    <property type="match status" value="1"/>
</dbReference>
<dbReference type="PANTHER" id="PTHR11587:SF2">
    <property type="entry name" value="ARGININOSUCCINATE SYNTHASE"/>
    <property type="match status" value="1"/>
</dbReference>
<dbReference type="Pfam" id="PF20979">
    <property type="entry name" value="Arginosuc_syn_C"/>
    <property type="match status" value="1"/>
</dbReference>
<dbReference type="Pfam" id="PF00764">
    <property type="entry name" value="Arginosuc_synth"/>
    <property type="match status" value="1"/>
</dbReference>
<dbReference type="SUPFAM" id="SSF52402">
    <property type="entry name" value="Adenine nucleotide alpha hydrolases-like"/>
    <property type="match status" value="1"/>
</dbReference>
<dbReference type="SUPFAM" id="SSF69864">
    <property type="entry name" value="Argininosuccinate synthetase, C-terminal domain"/>
    <property type="match status" value="1"/>
</dbReference>
<dbReference type="PROSITE" id="PS00564">
    <property type="entry name" value="ARGININOSUCCIN_SYN_1"/>
    <property type="match status" value="1"/>
</dbReference>
<dbReference type="PROSITE" id="PS00565">
    <property type="entry name" value="ARGININOSUCCIN_SYN_2"/>
    <property type="match status" value="1"/>
</dbReference>
<accession>Q12D55</accession>
<organism>
    <name type="scientific">Polaromonas sp. (strain JS666 / ATCC BAA-500)</name>
    <dbReference type="NCBI Taxonomy" id="296591"/>
    <lineage>
        <taxon>Bacteria</taxon>
        <taxon>Pseudomonadati</taxon>
        <taxon>Pseudomonadota</taxon>
        <taxon>Betaproteobacteria</taxon>
        <taxon>Burkholderiales</taxon>
        <taxon>Comamonadaceae</taxon>
        <taxon>Polaromonas</taxon>
    </lineage>
</organism>
<gene>
    <name evidence="1" type="primary">argG</name>
    <name type="ordered locus">Bpro_1599</name>
</gene>
<sequence>MATILQNLPAGQKVGIAFSGGLDTSAALHWMKLKGALPYAYTANLGQPDEPDYDEIPRKALQYGAEKARLIDCRSQLAAEGIAALQSGAFHITTAGVTYFNTTPLGRAVTGTMLVSAMKDDDVNIWGDGSTFKGNDIERFYRYGLLTNPNLRIYKPWLDQLFIDELGGRAEMSAFMTQAGFGYKMSAEKAYSTDSNMLGATHEAKDLEHLNSGMKIVNPIMGVAFWKDEVEVKREEVTVRFEEGQPVALNGKTFSNTVELILEANRIGGRHGLGMSDQIENRIIEAKSRGIYEAPGLALLFIAYERLVTGIHNEDTIEQYRDNGRRLGRLLYQGRWFDPQAIMLRETAQRWVARAVTGEVTVELRRGNDYSILNTVSPNLTYKPERLSMEKVEDAPFSPLDRIGQLTMRNLDIVDTRDKLAIYTQAGLLSAGQGASPPQLKNDERK</sequence>
<protein>
    <recommendedName>
        <fullName evidence="1">Argininosuccinate synthase</fullName>
        <ecNumber evidence="1">6.3.4.5</ecNumber>
    </recommendedName>
    <alternativeName>
        <fullName evidence="1">Citrulline--aspartate ligase</fullName>
    </alternativeName>
</protein>
<proteinExistence type="inferred from homology"/>
<reference key="1">
    <citation type="journal article" date="2008" name="Appl. Environ. Microbiol.">
        <title>The genome of Polaromonas sp. strain JS666: insights into the evolution of a hydrocarbon- and xenobiotic-degrading bacterium, and features of relevance to biotechnology.</title>
        <authorList>
            <person name="Mattes T.E."/>
            <person name="Alexander A.K."/>
            <person name="Richardson P.M."/>
            <person name="Munk A.C."/>
            <person name="Han C.S."/>
            <person name="Stothard P."/>
            <person name="Coleman N.V."/>
        </authorList>
    </citation>
    <scope>NUCLEOTIDE SEQUENCE [LARGE SCALE GENOMIC DNA]</scope>
    <source>
        <strain>JS666 / ATCC BAA-500</strain>
    </source>
</reference>
<comment type="catalytic activity">
    <reaction evidence="1">
        <text>L-citrulline + L-aspartate + ATP = 2-(N(omega)-L-arginino)succinate + AMP + diphosphate + H(+)</text>
        <dbReference type="Rhea" id="RHEA:10932"/>
        <dbReference type="ChEBI" id="CHEBI:15378"/>
        <dbReference type="ChEBI" id="CHEBI:29991"/>
        <dbReference type="ChEBI" id="CHEBI:30616"/>
        <dbReference type="ChEBI" id="CHEBI:33019"/>
        <dbReference type="ChEBI" id="CHEBI:57472"/>
        <dbReference type="ChEBI" id="CHEBI:57743"/>
        <dbReference type="ChEBI" id="CHEBI:456215"/>
        <dbReference type="EC" id="6.3.4.5"/>
    </reaction>
</comment>
<comment type="pathway">
    <text evidence="1">Amino-acid biosynthesis; L-arginine biosynthesis; L-arginine from L-ornithine and carbamoyl phosphate: step 2/3.</text>
</comment>
<comment type="subunit">
    <text evidence="1">Homotetramer.</text>
</comment>
<comment type="subcellular location">
    <subcellularLocation>
        <location evidence="1">Cytoplasm</location>
    </subcellularLocation>
</comment>
<comment type="similarity">
    <text evidence="1">Belongs to the argininosuccinate synthase family. Type 2 subfamily.</text>
</comment>
<evidence type="ECO:0000255" key="1">
    <source>
        <dbReference type="HAMAP-Rule" id="MF_00581"/>
    </source>
</evidence>
<name>ASSY_POLSJ</name>
<feature type="chain" id="PRO_1000025436" description="Argininosuccinate synthase">
    <location>
        <begin position="1"/>
        <end position="446"/>
    </location>
</feature>
<feature type="binding site" evidence="1">
    <location>
        <begin position="17"/>
        <end position="25"/>
    </location>
    <ligand>
        <name>ATP</name>
        <dbReference type="ChEBI" id="CHEBI:30616"/>
    </ligand>
</feature>
<feature type="binding site" evidence="1">
    <location>
        <position position="43"/>
    </location>
    <ligand>
        <name>ATP</name>
        <dbReference type="ChEBI" id="CHEBI:30616"/>
    </ligand>
</feature>
<feature type="binding site" evidence="1">
    <location>
        <position position="99"/>
    </location>
    <ligand>
        <name>L-citrulline</name>
        <dbReference type="ChEBI" id="CHEBI:57743"/>
    </ligand>
</feature>
<feature type="binding site" evidence="1">
    <location>
        <position position="129"/>
    </location>
    <ligand>
        <name>ATP</name>
        <dbReference type="ChEBI" id="CHEBI:30616"/>
    </ligand>
</feature>
<feature type="binding site" evidence="1">
    <location>
        <position position="131"/>
    </location>
    <ligand>
        <name>ATP</name>
        <dbReference type="ChEBI" id="CHEBI:30616"/>
    </ligand>
</feature>
<feature type="binding site" evidence="1">
    <location>
        <position position="131"/>
    </location>
    <ligand>
        <name>L-aspartate</name>
        <dbReference type="ChEBI" id="CHEBI:29991"/>
    </ligand>
</feature>
<feature type="binding site" evidence="1">
    <location>
        <position position="135"/>
    </location>
    <ligand>
        <name>L-aspartate</name>
        <dbReference type="ChEBI" id="CHEBI:29991"/>
    </ligand>
</feature>
<feature type="binding site" evidence="1">
    <location>
        <position position="135"/>
    </location>
    <ligand>
        <name>L-citrulline</name>
        <dbReference type="ChEBI" id="CHEBI:57743"/>
    </ligand>
</feature>
<feature type="binding site" evidence="1">
    <location>
        <position position="136"/>
    </location>
    <ligand>
        <name>ATP</name>
        <dbReference type="ChEBI" id="CHEBI:30616"/>
    </ligand>
</feature>
<feature type="binding site" evidence="1">
    <location>
        <position position="136"/>
    </location>
    <ligand>
        <name>L-aspartate</name>
        <dbReference type="ChEBI" id="CHEBI:29991"/>
    </ligand>
</feature>
<feature type="binding site" evidence="1">
    <location>
        <position position="139"/>
    </location>
    <ligand>
        <name>L-citrulline</name>
        <dbReference type="ChEBI" id="CHEBI:57743"/>
    </ligand>
</feature>
<feature type="binding site" evidence="1">
    <location>
        <position position="192"/>
    </location>
    <ligand>
        <name>L-citrulline</name>
        <dbReference type="ChEBI" id="CHEBI:57743"/>
    </ligand>
</feature>
<feature type="binding site" evidence="1">
    <location>
        <position position="194"/>
    </location>
    <ligand>
        <name>ATP</name>
        <dbReference type="ChEBI" id="CHEBI:30616"/>
    </ligand>
</feature>
<feature type="binding site" evidence="1">
    <location>
        <position position="201"/>
    </location>
    <ligand>
        <name>L-citrulline</name>
        <dbReference type="ChEBI" id="CHEBI:57743"/>
    </ligand>
</feature>
<feature type="binding site" evidence="1">
    <location>
        <position position="203"/>
    </location>
    <ligand>
        <name>L-citrulline</name>
        <dbReference type="ChEBI" id="CHEBI:57743"/>
    </ligand>
</feature>
<feature type="binding site" evidence="1">
    <location>
        <position position="280"/>
    </location>
    <ligand>
        <name>L-citrulline</name>
        <dbReference type="ChEBI" id="CHEBI:57743"/>
    </ligand>
</feature>
<keyword id="KW-0028">Amino-acid biosynthesis</keyword>
<keyword id="KW-0055">Arginine biosynthesis</keyword>
<keyword id="KW-0067">ATP-binding</keyword>
<keyword id="KW-0963">Cytoplasm</keyword>
<keyword id="KW-0436">Ligase</keyword>
<keyword id="KW-0547">Nucleotide-binding</keyword>
<keyword id="KW-1185">Reference proteome</keyword>